<organism>
    <name type="scientific">Caenorhabditis elegans</name>
    <dbReference type="NCBI Taxonomy" id="6239"/>
    <lineage>
        <taxon>Eukaryota</taxon>
        <taxon>Metazoa</taxon>
        <taxon>Ecdysozoa</taxon>
        <taxon>Nematoda</taxon>
        <taxon>Chromadorea</taxon>
        <taxon>Rhabditida</taxon>
        <taxon>Rhabditina</taxon>
        <taxon>Rhabditomorpha</taxon>
        <taxon>Rhabditoidea</taxon>
        <taxon>Rhabditidae</taxon>
        <taxon>Peloderinae</taxon>
        <taxon>Caenorhabditis</taxon>
    </lineage>
</organism>
<proteinExistence type="inferred from homology"/>
<name>ATP5E_CAEEL</name>
<accession>P34539</accession>
<evidence type="ECO:0000250" key="1"/>
<evidence type="ECO:0000305" key="2"/>
<feature type="chain" id="PRO_0000071665" description="Putative ATP synthase subunit epsilon, mitochondrial">
    <location>
        <begin position="1"/>
        <end position="54"/>
    </location>
</feature>
<dbReference type="EMBL" id="FO081667">
    <property type="protein sequence ID" value="CCD73192.1"/>
    <property type="molecule type" value="Genomic_DNA"/>
</dbReference>
<dbReference type="EMBL" id="FO081113">
    <property type="protein sequence ID" value="CCD69197.1"/>
    <property type="molecule type" value="Genomic_DNA"/>
</dbReference>
<dbReference type="PIR" id="S44879">
    <property type="entry name" value="S44879"/>
</dbReference>
<dbReference type="RefSeq" id="NP_001380031.1">
    <property type="nucleotide sequence ID" value="NM_001392153.1"/>
</dbReference>
<dbReference type="RefSeq" id="NP_498839.1">
    <property type="nucleotide sequence ID" value="NM_066438.1"/>
</dbReference>
<dbReference type="RefSeq" id="NP_498841.1">
    <property type="nucleotide sequence ID" value="NM_066440.1"/>
</dbReference>
<dbReference type="SMR" id="P34539"/>
<dbReference type="BioGRID" id="41382">
    <property type="interactions" value="1"/>
</dbReference>
<dbReference type="BioGRID" id="55681">
    <property type="interactions" value="6"/>
</dbReference>
<dbReference type="FunCoup" id="P34539">
    <property type="interactions" value="587"/>
</dbReference>
<dbReference type="IntAct" id="P34539">
    <property type="interactions" value="1"/>
</dbReference>
<dbReference type="STRING" id="6239.R05D3.6.1"/>
<dbReference type="PaxDb" id="6239-R05D3.6"/>
<dbReference type="PeptideAtlas" id="P34539"/>
<dbReference type="EnsemblMetazoa" id="R05D3.6.1">
    <property type="protein sequence ID" value="R05D3.6.1"/>
    <property type="gene ID" value="WBGene00019880"/>
</dbReference>
<dbReference type="EnsemblMetazoa" id="ZC262.5.1">
    <property type="protein sequence ID" value="ZC262.5.1"/>
    <property type="gene ID" value="WBGene00022582"/>
</dbReference>
<dbReference type="GeneID" id="176178"/>
<dbReference type="GeneID" id="191132"/>
<dbReference type="KEGG" id="cel:CELE_ZC262.5"/>
<dbReference type="UCSC" id="ZC262.5">
    <property type="organism name" value="c. elegans"/>
</dbReference>
<dbReference type="AGR" id="WB:WBGene00019880"/>
<dbReference type="AGR" id="WB:WBGene00022582"/>
<dbReference type="CTD" id="191132"/>
<dbReference type="WormBase" id="R05D3.6">
    <property type="protein sequence ID" value="CE00285"/>
    <property type="gene ID" value="WBGene00019880"/>
</dbReference>
<dbReference type="WormBase" id="ZC262.5">
    <property type="protein sequence ID" value="CE00285"/>
    <property type="gene ID" value="WBGene00022582"/>
</dbReference>
<dbReference type="eggNOG" id="KOG3495">
    <property type="taxonomic scope" value="Eukaryota"/>
</dbReference>
<dbReference type="GeneTree" id="ENSGT00970000196975"/>
<dbReference type="HOGENOM" id="CLU_187039_3_1_1"/>
<dbReference type="InParanoid" id="P34539"/>
<dbReference type="OrthoDB" id="269124at2759"/>
<dbReference type="PhylomeDB" id="P34539"/>
<dbReference type="PRO" id="PR:P34539"/>
<dbReference type="Proteomes" id="UP000001940">
    <property type="component" value="Chromosome III"/>
</dbReference>
<dbReference type="Bgee" id="WBGene00019880">
    <property type="expression patterns" value="Expressed in pharyngeal muscle cell (C elegans) and 3 other cell types or tissues"/>
</dbReference>
<dbReference type="GO" id="GO:0005743">
    <property type="term" value="C:mitochondrial inner membrane"/>
    <property type="evidence" value="ECO:0000318"/>
    <property type="project" value="GO_Central"/>
</dbReference>
<dbReference type="GO" id="GO:0005739">
    <property type="term" value="C:mitochondrion"/>
    <property type="evidence" value="ECO:0007005"/>
    <property type="project" value="WormBase"/>
</dbReference>
<dbReference type="GO" id="GO:0045259">
    <property type="term" value="C:proton-transporting ATP synthase complex"/>
    <property type="evidence" value="ECO:0007669"/>
    <property type="project" value="UniProtKB-KW"/>
</dbReference>
<dbReference type="GO" id="GO:0046933">
    <property type="term" value="F:proton-transporting ATP synthase activity, rotational mechanism"/>
    <property type="evidence" value="ECO:0007669"/>
    <property type="project" value="InterPro"/>
</dbReference>
<dbReference type="GO" id="GO:0042776">
    <property type="term" value="P:proton motive force-driven mitochondrial ATP synthesis"/>
    <property type="evidence" value="ECO:0000318"/>
    <property type="project" value="GO_Central"/>
</dbReference>
<dbReference type="CDD" id="cd12153">
    <property type="entry name" value="F1-ATPase_epsilon"/>
    <property type="match status" value="1"/>
</dbReference>
<dbReference type="Gene3D" id="1.10.1620.20">
    <property type="entry name" value="ATP synthase, F1 complex, epsilon subunit superfamily, mitochondrial"/>
    <property type="match status" value="1"/>
</dbReference>
<dbReference type="InterPro" id="IPR006721">
    <property type="entry name" value="ATP_synth_F1_esu_mt"/>
</dbReference>
<dbReference type="InterPro" id="IPR036742">
    <property type="entry name" value="ATP_synth_F1_esu_sf_mt"/>
</dbReference>
<dbReference type="PANTHER" id="PTHR12448">
    <property type="entry name" value="ATP SYNTHASE EPSILON CHAIN, MITOCHONDRIAL"/>
    <property type="match status" value="1"/>
</dbReference>
<dbReference type="PANTHER" id="PTHR12448:SF0">
    <property type="entry name" value="ATP SYNTHASE SUBUNIT EPSILON, MITOCHONDRIAL"/>
    <property type="match status" value="1"/>
</dbReference>
<dbReference type="Pfam" id="PF04627">
    <property type="entry name" value="ATP-synt_Eps"/>
    <property type="match status" value="1"/>
</dbReference>
<dbReference type="SUPFAM" id="SSF48690">
    <property type="entry name" value="Epsilon subunit of mitochondrial F1F0-ATP synthase"/>
    <property type="match status" value="1"/>
</dbReference>
<gene>
    <name type="ORF">R05D3.6</name>
</gene>
<gene>
    <name type="ORF">ZC262.5</name>
</gene>
<sequence length="54" mass="5926">MVAWRAAGLNYVRYSQIAAQVVRQCTKGGANVKKPQATLKTTAWENGKMVSKSQ</sequence>
<protein>
    <recommendedName>
        <fullName>Putative ATP synthase subunit epsilon, mitochondrial</fullName>
        <shortName>ATPase subunit epsilon</shortName>
    </recommendedName>
</protein>
<reference key="1">
    <citation type="journal article" date="1994" name="Nature">
        <title>2.2 Mb of contiguous nucleotide sequence from chromosome III of C. elegans.</title>
        <authorList>
            <person name="Wilson R."/>
            <person name="Ainscough R."/>
            <person name="Anderson K."/>
            <person name="Baynes C."/>
            <person name="Berks M."/>
            <person name="Bonfield J."/>
            <person name="Burton J."/>
            <person name="Connell M."/>
            <person name="Copsey T."/>
            <person name="Cooper J."/>
            <person name="Coulson A."/>
            <person name="Craxton M."/>
            <person name="Dear S."/>
            <person name="Du Z."/>
            <person name="Durbin R."/>
            <person name="Favello A."/>
            <person name="Fraser A."/>
            <person name="Fulton L."/>
            <person name="Gardner A."/>
            <person name="Green P."/>
            <person name="Hawkins T."/>
            <person name="Hillier L."/>
            <person name="Jier M."/>
            <person name="Johnston L."/>
            <person name="Jones M."/>
            <person name="Kershaw J."/>
            <person name="Kirsten J."/>
            <person name="Laisster N."/>
            <person name="Latreille P."/>
            <person name="Lightning J."/>
            <person name="Lloyd C."/>
            <person name="Mortimore B."/>
            <person name="O'Callaghan M."/>
            <person name="Parsons J."/>
            <person name="Percy C."/>
            <person name="Rifken L."/>
            <person name="Roopra A."/>
            <person name="Saunders D."/>
            <person name="Shownkeen R."/>
            <person name="Sims M."/>
            <person name="Smaldon N."/>
            <person name="Smith A."/>
            <person name="Smith M."/>
            <person name="Sonnhammer E."/>
            <person name="Staden R."/>
            <person name="Sulston J."/>
            <person name="Thierry-Mieg J."/>
            <person name="Thomas K."/>
            <person name="Vaudin M."/>
            <person name="Vaughan K."/>
            <person name="Waterston R."/>
            <person name="Watson A."/>
            <person name="Weinstock L."/>
            <person name="Wilkinson-Sproat J."/>
            <person name="Wohldman P."/>
        </authorList>
    </citation>
    <scope>NUCLEOTIDE SEQUENCE [LARGE SCALE GENOMIC DNA]</scope>
    <source>
        <strain>Bristol N2</strain>
    </source>
</reference>
<reference key="2">
    <citation type="journal article" date="1998" name="Science">
        <title>Genome sequence of the nematode C. elegans: a platform for investigating biology.</title>
        <authorList>
            <consortium name="The C. elegans sequencing consortium"/>
        </authorList>
    </citation>
    <scope>NUCLEOTIDE SEQUENCE [LARGE SCALE GENOMIC DNA]</scope>
    <source>
        <strain>Bristol N2</strain>
    </source>
</reference>
<keyword id="KW-0066">ATP synthesis</keyword>
<keyword id="KW-0139">CF(1)</keyword>
<keyword id="KW-0375">Hydrogen ion transport</keyword>
<keyword id="KW-0406">Ion transport</keyword>
<keyword id="KW-0472">Membrane</keyword>
<keyword id="KW-0496">Mitochondrion</keyword>
<keyword id="KW-0999">Mitochondrion inner membrane</keyword>
<keyword id="KW-1185">Reference proteome</keyword>
<keyword id="KW-0813">Transport</keyword>
<comment type="function">
    <text>Mitochondrial membrane ATP synthase (F(1)F(0) ATP synthase or Complex V) produces ATP from ADP in the presence of a proton gradient across the membrane which is generated by electron transport complexes of the respiratory chain. F-type ATPases consist of two structural domains, F(1) - containing the extramembraneous catalytic core, and F(0) - containing the membrane proton channel, linked together by a central stalk and a peripheral stalk. During catalysis, ATP synthesis in the catalytic domain of F(1) is coupled via a rotary mechanism of the central stalk subunits to proton translocation. Part of the complex F(1) domain and of the central stalk which is part of the complex rotary element. Rotation of the central stalk against the surrounding alpha(3)beta(3) subunits leads to hydrolysis of ATP in three separate catalytic sites on the beta subunits.</text>
</comment>
<comment type="subunit">
    <text evidence="1">F-type ATPases have 2 components, CF(1) - the catalytic core - and CF(0) - the membrane proton channel. CF(1) has five subunits: alpha(3), beta(3), gamma(1), delta(1), epsilon(1). CF(0) seems to have nine subunits: a, b, c, d, e, f, g, F6 and 8 (or A6L) (By similarity).</text>
</comment>
<comment type="subcellular location">
    <subcellularLocation>
        <location>Mitochondrion</location>
    </subcellularLocation>
    <subcellularLocation>
        <location>Mitochondrion inner membrane</location>
    </subcellularLocation>
</comment>
<comment type="similarity">
    <text evidence="2">Belongs to the eukaryotic ATPase epsilon family.</text>
</comment>